<comment type="function">
    <text evidence="1 2">Catalyzes the decarboxylation of orotidine 5'-monophosphate (OMP) to uridine 5'-monophosphate (UMP).</text>
</comment>
<comment type="catalytic activity">
    <reaction evidence="1">
        <text>orotidine 5'-phosphate + H(+) = UMP + CO2</text>
        <dbReference type="Rhea" id="RHEA:11596"/>
        <dbReference type="ChEBI" id="CHEBI:15378"/>
        <dbReference type="ChEBI" id="CHEBI:16526"/>
        <dbReference type="ChEBI" id="CHEBI:57538"/>
        <dbReference type="ChEBI" id="CHEBI:57865"/>
        <dbReference type="EC" id="4.1.1.23"/>
    </reaction>
</comment>
<comment type="pathway">
    <text evidence="1">Pyrimidine metabolism; UMP biosynthesis via de novo pathway; UMP from orotate: step 2/2.</text>
</comment>
<comment type="subunit">
    <text>Homodimer.</text>
</comment>
<comment type="similarity">
    <text evidence="1">Belongs to the OMP decarboxylase family. Type 1 subfamily.</text>
</comment>
<organism>
    <name type="scientific">Salmonella typhimurium (strain LT2 / SGSC1412 / ATCC 700720)</name>
    <dbReference type="NCBI Taxonomy" id="99287"/>
    <lineage>
        <taxon>Bacteria</taxon>
        <taxon>Pseudomonadati</taxon>
        <taxon>Pseudomonadota</taxon>
        <taxon>Gammaproteobacteria</taxon>
        <taxon>Enterobacterales</taxon>
        <taxon>Enterobacteriaceae</taxon>
        <taxon>Salmonella</taxon>
    </lineage>
</organism>
<reference key="1">
    <citation type="journal article" date="1987" name="Eur. J. Biochem.">
        <title>Cloning and characterization of the pyrF operon of Salmonella typhimurium.</title>
        <authorList>
            <person name="Theisen M."/>
            <person name="Kelln R.A."/>
            <person name="Neuhard J."/>
        </authorList>
    </citation>
    <scope>NUCLEOTIDE SEQUENCE [GENOMIC DNA]</scope>
    <scope>FUNCTION</scope>
</reference>
<reference key="2">
    <citation type="journal article" date="2001" name="Nature">
        <title>Complete genome sequence of Salmonella enterica serovar Typhimurium LT2.</title>
        <authorList>
            <person name="McClelland M."/>
            <person name="Sanderson K.E."/>
            <person name="Spieth J."/>
            <person name="Clifton S.W."/>
            <person name="Latreille P."/>
            <person name="Courtney L."/>
            <person name="Porwollik S."/>
            <person name="Ali J."/>
            <person name="Dante M."/>
            <person name="Du F."/>
            <person name="Hou S."/>
            <person name="Layman D."/>
            <person name="Leonard S."/>
            <person name="Nguyen C."/>
            <person name="Scott K."/>
            <person name="Holmes A."/>
            <person name="Grewal N."/>
            <person name="Mulvaney E."/>
            <person name="Ryan E."/>
            <person name="Sun H."/>
            <person name="Florea L."/>
            <person name="Miller W."/>
            <person name="Stoneking T."/>
            <person name="Nhan M."/>
            <person name="Waterston R."/>
            <person name="Wilson R.K."/>
        </authorList>
    </citation>
    <scope>NUCLEOTIDE SEQUENCE [LARGE SCALE GENOMIC DNA]</scope>
    <source>
        <strain>LT2 / SGSC1412 / ATCC 700720</strain>
    </source>
</reference>
<feature type="chain" id="PRO_0000134571" description="Orotidine 5'-phosphate decarboxylase">
    <location>
        <begin position="1"/>
        <end position="245"/>
    </location>
</feature>
<feature type="active site" description="Proton donor" evidence="1">
    <location>
        <position position="73"/>
    </location>
</feature>
<feature type="binding site" evidence="1">
    <location>
        <position position="22"/>
    </location>
    <ligand>
        <name>substrate</name>
    </ligand>
</feature>
<feature type="binding site" evidence="1">
    <location>
        <position position="44"/>
    </location>
    <ligand>
        <name>substrate</name>
    </ligand>
</feature>
<feature type="binding site" evidence="1">
    <location>
        <begin position="71"/>
        <end position="80"/>
    </location>
    <ligand>
        <name>substrate</name>
    </ligand>
</feature>
<feature type="binding site" evidence="1">
    <location>
        <position position="131"/>
    </location>
    <ligand>
        <name>substrate</name>
    </ligand>
</feature>
<feature type="binding site" evidence="1">
    <location>
        <position position="192"/>
    </location>
    <ligand>
        <name>substrate</name>
    </ligand>
</feature>
<feature type="binding site" evidence="1">
    <location>
        <position position="201"/>
    </location>
    <ligand>
        <name>substrate</name>
    </ligand>
</feature>
<feature type="binding site" evidence="1">
    <location>
        <position position="221"/>
    </location>
    <ligand>
        <name>substrate</name>
    </ligand>
</feature>
<feature type="binding site" evidence="1">
    <location>
        <position position="222"/>
    </location>
    <ligand>
        <name>substrate</name>
    </ligand>
</feature>
<feature type="sequence conflict" description="In Ref. 1; CAA28973." evidence="3" ref="1">
    <original>R</original>
    <variation>A</variation>
    <location>
        <position position="153"/>
    </location>
</feature>
<accession>P07691</accession>
<name>PYRF_SALTY</name>
<sequence>MTFTASSSSCAITESPVVVALDYHERDKALAFVDKIDPRDCRLKVGKEMFTLFGPQLVRDLQQRGFDVFLDLKFHDIPNTTARAVAAAADLGVWMVNVHASGGARMMAAARDALAPFSKDAPLLIAVTVLTSMETSDLHDLGVTLSPAEHAERLARLTQQCGLDGVVCSAQEAVRFKQAFGAAFKLVTPGIRPAGSEAGDQRRIMTPEQALSAGVDYMVIGRPVTQSVDPAQTLKDINASLKREA</sequence>
<proteinExistence type="inferred from homology"/>
<keyword id="KW-0210">Decarboxylase</keyword>
<keyword id="KW-0456">Lyase</keyword>
<keyword id="KW-0665">Pyrimidine biosynthesis</keyword>
<keyword id="KW-1185">Reference proteome</keyword>
<protein>
    <recommendedName>
        <fullName evidence="1">Orotidine 5'-phosphate decarboxylase</fullName>
        <ecNumber evidence="1">4.1.1.23</ecNumber>
    </recommendedName>
    <alternativeName>
        <fullName evidence="1">OMP decarboxylase</fullName>
        <shortName evidence="1">OMPDCase</shortName>
        <shortName evidence="1">OMPdecase</shortName>
    </alternativeName>
</protein>
<dbReference type="EC" id="4.1.1.23" evidence="1"/>
<dbReference type="EMBL" id="X05382">
    <property type="protein sequence ID" value="CAA28973.1"/>
    <property type="molecule type" value="Genomic_DNA"/>
</dbReference>
<dbReference type="EMBL" id="AE006468">
    <property type="protein sequence ID" value="AAL20625.1"/>
    <property type="molecule type" value="Genomic_DNA"/>
</dbReference>
<dbReference type="PIR" id="A27190">
    <property type="entry name" value="DCEBOT"/>
</dbReference>
<dbReference type="RefSeq" id="NP_460666.1">
    <property type="nucleotide sequence ID" value="NC_003197.2"/>
</dbReference>
<dbReference type="RefSeq" id="WP_001542125.1">
    <property type="nucleotide sequence ID" value="NC_003197.2"/>
</dbReference>
<dbReference type="SMR" id="P07691"/>
<dbReference type="STRING" id="99287.STM1707"/>
<dbReference type="PaxDb" id="99287-STM1707"/>
<dbReference type="GeneID" id="1253226"/>
<dbReference type="KEGG" id="stm:STM1707"/>
<dbReference type="PATRIC" id="fig|99287.12.peg.1802"/>
<dbReference type="HOGENOM" id="CLU_067069_0_0_6"/>
<dbReference type="OMA" id="FWKVGLE"/>
<dbReference type="PhylomeDB" id="P07691"/>
<dbReference type="BioCyc" id="SENT99287:STM1707-MONOMER"/>
<dbReference type="UniPathway" id="UPA00070">
    <property type="reaction ID" value="UER00120"/>
</dbReference>
<dbReference type="Proteomes" id="UP000001014">
    <property type="component" value="Chromosome"/>
</dbReference>
<dbReference type="GO" id="GO:0005829">
    <property type="term" value="C:cytosol"/>
    <property type="evidence" value="ECO:0000318"/>
    <property type="project" value="GO_Central"/>
</dbReference>
<dbReference type="GO" id="GO:0004590">
    <property type="term" value="F:orotidine-5'-phosphate decarboxylase activity"/>
    <property type="evidence" value="ECO:0000318"/>
    <property type="project" value="GO_Central"/>
</dbReference>
<dbReference type="GO" id="GO:0006207">
    <property type="term" value="P:'de novo' pyrimidine nucleobase biosynthetic process"/>
    <property type="evidence" value="ECO:0000318"/>
    <property type="project" value="GO_Central"/>
</dbReference>
<dbReference type="GO" id="GO:0044205">
    <property type="term" value="P:'de novo' UMP biosynthetic process"/>
    <property type="evidence" value="ECO:0007669"/>
    <property type="project" value="UniProtKB-UniRule"/>
</dbReference>
<dbReference type="CDD" id="cd04725">
    <property type="entry name" value="OMP_decarboxylase_like"/>
    <property type="match status" value="1"/>
</dbReference>
<dbReference type="FunFam" id="3.20.20.70:FF:000015">
    <property type="entry name" value="Orotidine 5'-phosphate decarboxylase"/>
    <property type="match status" value="1"/>
</dbReference>
<dbReference type="Gene3D" id="3.20.20.70">
    <property type="entry name" value="Aldolase class I"/>
    <property type="match status" value="1"/>
</dbReference>
<dbReference type="HAMAP" id="MF_01200_B">
    <property type="entry name" value="OMPdecase_type1_B"/>
    <property type="match status" value="1"/>
</dbReference>
<dbReference type="InterPro" id="IPR013785">
    <property type="entry name" value="Aldolase_TIM"/>
</dbReference>
<dbReference type="InterPro" id="IPR014732">
    <property type="entry name" value="OMPdecase"/>
</dbReference>
<dbReference type="InterPro" id="IPR018089">
    <property type="entry name" value="OMPdecase_AS"/>
</dbReference>
<dbReference type="InterPro" id="IPR047596">
    <property type="entry name" value="OMPdecase_bac"/>
</dbReference>
<dbReference type="InterPro" id="IPR001754">
    <property type="entry name" value="OMPdeCOase_dom"/>
</dbReference>
<dbReference type="InterPro" id="IPR011060">
    <property type="entry name" value="RibuloseP-bd_barrel"/>
</dbReference>
<dbReference type="NCBIfam" id="NF001273">
    <property type="entry name" value="PRK00230.1"/>
    <property type="match status" value="1"/>
</dbReference>
<dbReference type="NCBIfam" id="TIGR01740">
    <property type="entry name" value="pyrF"/>
    <property type="match status" value="1"/>
</dbReference>
<dbReference type="PANTHER" id="PTHR32119">
    <property type="entry name" value="OROTIDINE 5'-PHOSPHATE DECARBOXYLASE"/>
    <property type="match status" value="1"/>
</dbReference>
<dbReference type="PANTHER" id="PTHR32119:SF2">
    <property type="entry name" value="OROTIDINE 5'-PHOSPHATE DECARBOXYLASE"/>
    <property type="match status" value="1"/>
</dbReference>
<dbReference type="Pfam" id="PF00215">
    <property type="entry name" value="OMPdecase"/>
    <property type="match status" value="1"/>
</dbReference>
<dbReference type="SMART" id="SM00934">
    <property type="entry name" value="OMPdecase"/>
    <property type="match status" value="1"/>
</dbReference>
<dbReference type="SUPFAM" id="SSF51366">
    <property type="entry name" value="Ribulose-phoshate binding barrel"/>
    <property type="match status" value="1"/>
</dbReference>
<dbReference type="PROSITE" id="PS00156">
    <property type="entry name" value="OMPDECASE"/>
    <property type="match status" value="1"/>
</dbReference>
<evidence type="ECO:0000255" key="1">
    <source>
        <dbReference type="HAMAP-Rule" id="MF_01200"/>
    </source>
</evidence>
<evidence type="ECO:0000269" key="2">
    <source>
    </source>
</evidence>
<evidence type="ECO:0000305" key="3"/>
<gene>
    <name evidence="1" type="primary">pyrF</name>
    <name type="ordered locus">STM1707</name>
</gene>